<protein>
    <recommendedName>
        <fullName evidence="4">Pyridoxine 5'-phosphate oxidase</fullName>
        <shortName evidence="4">PNP oxidase</shortName>
        <shortName evidence="4">PNPOx</shortName>
        <ecNumber evidence="1 3">1.4.3.5</ecNumber>
    </recommendedName>
    <alternativeName>
        <fullName evidence="1">Pyridoxal 5'-phosphate synthase</fullName>
    </alternativeName>
</protein>
<accession>P9WIJ1</accession>
<accession>L0TBR8</accession>
<accession>O06207</accession>
<accession>P65682</accession>
<dbReference type="EC" id="1.4.3.5" evidence="1 3"/>
<dbReference type="EMBL" id="AL123456">
    <property type="protein sequence ID" value="CCP45404.1"/>
    <property type="molecule type" value="Genomic_DNA"/>
</dbReference>
<dbReference type="PIR" id="F70570">
    <property type="entry name" value="F70570"/>
</dbReference>
<dbReference type="RefSeq" id="NP_217123.1">
    <property type="nucleotide sequence ID" value="NC_000962.3"/>
</dbReference>
<dbReference type="RefSeq" id="WP_003413471.1">
    <property type="nucleotide sequence ID" value="NZ_NVQJ01000023.1"/>
</dbReference>
<dbReference type="PDB" id="2A2J">
    <property type="method" value="X-ray"/>
    <property type="resolution" value="2.50 A"/>
    <property type="chains" value="A/B=1-224"/>
</dbReference>
<dbReference type="PDBsum" id="2A2J"/>
<dbReference type="SMR" id="P9WIJ1"/>
<dbReference type="FunCoup" id="P9WIJ1">
    <property type="interactions" value="415"/>
</dbReference>
<dbReference type="STRING" id="83332.Rv2607"/>
<dbReference type="PaxDb" id="83332-Rv2607"/>
<dbReference type="DNASU" id="888155"/>
<dbReference type="GeneID" id="45426610"/>
<dbReference type="GeneID" id="888155"/>
<dbReference type="KEGG" id="mtu:Rv2607"/>
<dbReference type="KEGG" id="mtv:RVBD_2607"/>
<dbReference type="PATRIC" id="fig|83332.111.peg.2911"/>
<dbReference type="TubercuList" id="Rv2607"/>
<dbReference type="eggNOG" id="COG0259">
    <property type="taxonomic scope" value="Bacteria"/>
</dbReference>
<dbReference type="InParanoid" id="P9WIJ1"/>
<dbReference type="OrthoDB" id="9780392at2"/>
<dbReference type="PhylomeDB" id="P9WIJ1"/>
<dbReference type="UniPathway" id="UPA01068">
    <property type="reaction ID" value="UER00305"/>
</dbReference>
<dbReference type="EvolutionaryTrace" id="P9WIJ1"/>
<dbReference type="Proteomes" id="UP000001584">
    <property type="component" value="Chromosome"/>
</dbReference>
<dbReference type="GO" id="GO:0010181">
    <property type="term" value="F:FMN binding"/>
    <property type="evidence" value="ECO:0000314"/>
    <property type="project" value="UniProtKB"/>
</dbReference>
<dbReference type="GO" id="GO:0016638">
    <property type="term" value="F:oxidoreductase activity, acting on the CH-NH2 group of donors"/>
    <property type="evidence" value="ECO:0007669"/>
    <property type="project" value="InterPro"/>
</dbReference>
<dbReference type="GO" id="GO:0016899">
    <property type="term" value="F:oxidoreductase activity, acting on the CH-OH group of donors, oxygen as acceptor"/>
    <property type="evidence" value="ECO:0000314"/>
    <property type="project" value="UniProtKB"/>
</dbReference>
<dbReference type="GO" id="GO:0042803">
    <property type="term" value="F:protein homodimerization activity"/>
    <property type="evidence" value="ECO:0000314"/>
    <property type="project" value="UniProtKB"/>
</dbReference>
<dbReference type="GO" id="GO:0042823">
    <property type="term" value="P:pyridoxal phosphate biosynthetic process"/>
    <property type="evidence" value="ECO:0000314"/>
    <property type="project" value="UniProtKB"/>
</dbReference>
<dbReference type="GO" id="GO:0008615">
    <property type="term" value="P:pyridoxine biosynthetic process"/>
    <property type="evidence" value="ECO:0007669"/>
    <property type="project" value="UniProtKB-KW"/>
</dbReference>
<dbReference type="FunFam" id="2.30.110.10:FF:000021">
    <property type="entry name" value="Pyridoxine 5'-phosphate oxidase"/>
    <property type="match status" value="1"/>
</dbReference>
<dbReference type="Gene3D" id="2.30.110.10">
    <property type="entry name" value="Electron Transport, Fmn-binding Protein, Chain A"/>
    <property type="match status" value="1"/>
</dbReference>
<dbReference type="HAMAP" id="MF_01629">
    <property type="entry name" value="PdxH"/>
    <property type="match status" value="1"/>
</dbReference>
<dbReference type="InterPro" id="IPR000659">
    <property type="entry name" value="Pyridox_Oxase"/>
</dbReference>
<dbReference type="InterPro" id="IPR019740">
    <property type="entry name" value="Pyridox_Oxase_CS"/>
</dbReference>
<dbReference type="InterPro" id="IPR011576">
    <property type="entry name" value="Pyridox_Oxase_N"/>
</dbReference>
<dbReference type="InterPro" id="IPR019576">
    <property type="entry name" value="Pyridoxamine_oxidase_dimer_C"/>
</dbReference>
<dbReference type="InterPro" id="IPR012349">
    <property type="entry name" value="Split_barrel_FMN-bd"/>
</dbReference>
<dbReference type="NCBIfam" id="TIGR00558">
    <property type="entry name" value="pdxH"/>
    <property type="match status" value="1"/>
</dbReference>
<dbReference type="NCBIfam" id="NF004231">
    <property type="entry name" value="PRK05679.1"/>
    <property type="match status" value="1"/>
</dbReference>
<dbReference type="PANTHER" id="PTHR10851:SF0">
    <property type="entry name" value="PYRIDOXINE-5'-PHOSPHATE OXIDASE"/>
    <property type="match status" value="1"/>
</dbReference>
<dbReference type="PANTHER" id="PTHR10851">
    <property type="entry name" value="PYRIDOXINE-5-PHOSPHATE OXIDASE"/>
    <property type="match status" value="1"/>
</dbReference>
<dbReference type="Pfam" id="PF10590">
    <property type="entry name" value="PNP_phzG_C"/>
    <property type="match status" value="1"/>
</dbReference>
<dbReference type="Pfam" id="PF01243">
    <property type="entry name" value="PNPOx_N"/>
    <property type="match status" value="1"/>
</dbReference>
<dbReference type="PIRSF" id="PIRSF000190">
    <property type="entry name" value="Pyd_amn-ph_oxd"/>
    <property type="match status" value="1"/>
</dbReference>
<dbReference type="SUPFAM" id="SSF50475">
    <property type="entry name" value="FMN-binding split barrel"/>
    <property type="match status" value="1"/>
</dbReference>
<dbReference type="PROSITE" id="PS01064">
    <property type="entry name" value="PYRIDOX_OXIDASE"/>
    <property type="match status" value="1"/>
</dbReference>
<evidence type="ECO:0000255" key="1">
    <source>
        <dbReference type="HAMAP-Rule" id="MF_01629"/>
    </source>
</evidence>
<evidence type="ECO:0000269" key="2">
    <source>
    </source>
</evidence>
<evidence type="ECO:0000269" key="3">
    <source>
    </source>
</evidence>
<evidence type="ECO:0000303" key="4">
    <source>
    </source>
</evidence>
<evidence type="ECO:0000305" key="5"/>
<evidence type="ECO:0007829" key="6">
    <source>
        <dbReference type="PDB" id="2A2J"/>
    </source>
</evidence>
<reference key="1">
    <citation type="journal article" date="1998" name="Nature">
        <title>Deciphering the biology of Mycobacterium tuberculosis from the complete genome sequence.</title>
        <authorList>
            <person name="Cole S.T."/>
            <person name="Brosch R."/>
            <person name="Parkhill J."/>
            <person name="Garnier T."/>
            <person name="Churcher C.M."/>
            <person name="Harris D.E."/>
            <person name="Gordon S.V."/>
            <person name="Eiglmeier K."/>
            <person name="Gas S."/>
            <person name="Barry C.E. III"/>
            <person name="Tekaia F."/>
            <person name="Badcock K."/>
            <person name="Basham D."/>
            <person name="Brown D."/>
            <person name="Chillingworth T."/>
            <person name="Connor R."/>
            <person name="Davies R.M."/>
            <person name="Devlin K."/>
            <person name="Feltwell T."/>
            <person name="Gentles S."/>
            <person name="Hamlin N."/>
            <person name="Holroyd S."/>
            <person name="Hornsby T."/>
            <person name="Jagels K."/>
            <person name="Krogh A."/>
            <person name="McLean J."/>
            <person name="Moule S."/>
            <person name="Murphy L.D."/>
            <person name="Oliver S."/>
            <person name="Osborne J."/>
            <person name="Quail M.A."/>
            <person name="Rajandream M.A."/>
            <person name="Rogers J."/>
            <person name="Rutter S."/>
            <person name="Seeger K."/>
            <person name="Skelton S."/>
            <person name="Squares S."/>
            <person name="Squares R."/>
            <person name="Sulston J.E."/>
            <person name="Taylor K."/>
            <person name="Whitehead S."/>
            <person name="Barrell B.G."/>
        </authorList>
    </citation>
    <scope>NUCLEOTIDE SEQUENCE [LARGE SCALE GENOMIC DNA]</scope>
    <source>
        <strain>ATCC 25618 / H37Rv</strain>
    </source>
</reference>
<reference key="2">
    <citation type="journal article" date="2011" name="Mol. Cell. Proteomics">
        <title>Proteogenomic analysis of Mycobacterium tuberculosis by high resolution mass spectrometry.</title>
        <authorList>
            <person name="Kelkar D.S."/>
            <person name="Kumar D."/>
            <person name="Kumar P."/>
            <person name="Balakrishnan L."/>
            <person name="Muthusamy B."/>
            <person name="Yadav A.K."/>
            <person name="Shrivastava P."/>
            <person name="Marimuthu A."/>
            <person name="Anand S."/>
            <person name="Sundaram H."/>
            <person name="Kingsbury R."/>
            <person name="Harsha H.C."/>
            <person name="Nair B."/>
            <person name="Prasad T.S."/>
            <person name="Chauhan D.S."/>
            <person name="Katoch K."/>
            <person name="Katoch V.M."/>
            <person name="Kumar P."/>
            <person name="Chaerkady R."/>
            <person name="Ramachandran S."/>
            <person name="Dash D."/>
            <person name="Pandey A."/>
        </authorList>
    </citation>
    <scope>IDENTIFICATION BY MASS SPECTROMETRY [LARGE SCALE ANALYSIS]</scope>
    <source>
        <strain>ATCC 25618 / H37Rv</strain>
    </source>
</reference>
<reference key="3">
    <citation type="journal article" date="2011" name="PLoS ONE">
        <title>Rv2607 from Mycobacterium tuberculosis is a pyridoxine 5'-phosphate oxidase with unusual substrate specificity.</title>
        <authorList>
            <person name="Mashalidis E.H."/>
            <person name="Mukherjee T."/>
            <person name="Sledz P."/>
            <person name="Matak-Vinkovic D."/>
            <person name="Boshoff H."/>
            <person name="Abell C."/>
            <person name="Barry C.E. III"/>
        </authorList>
    </citation>
    <scope>FUNCTION</scope>
    <scope>CATALYTIC ACTIVITY</scope>
    <scope>SUBSTRATE SPECIFICITY</scope>
    <scope>COFACTOR</scope>
    <scope>BIOPHYSICOCHEMICAL PROPERTIES</scope>
    <scope>SUBUNIT</scope>
    <scope>PATHWAY</scope>
    <source>
        <strain>H37Rv</strain>
    </source>
</reference>
<reference key="4">
    <citation type="journal article" date="2006" name="Proteins">
        <title>Crystal structure of a putative pyridoxine 5'-phosphate oxidase (Rv2607) from Mycobacterium tuberculosis.</title>
        <authorList>
            <person name="Pedelacq J.-D."/>
            <person name="Rho B.-S."/>
            <person name="Kim C.-Y."/>
            <person name="Waldo G.S."/>
            <person name="Lekin T.P."/>
            <person name="Segelke B.W."/>
            <person name="Rupp B."/>
            <person name="Hung L.-W."/>
            <person name="Kim S.-I."/>
            <person name="Terwilliger T.C."/>
        </authorList>
    </citation>
    <scope>X-RAY CRYSTALLOGRAPHY (2.5 ANGSTROMS) IN COMPLEX WITH FMN</scope>
    <scope>SUBUNIT</scope>
</reference>
<organism>
    <name type="scientific">Mycobacterium tuberculosis (strain ATCC 25618 / H37Rv)</name>
    <dbReference type="NCBI Taxonomy" id="83332"/>
    <lineage>
        <taxon>Bacteria</taxon>
        <taxon>Bacillati</taxon>
        <taxon>Actinomycetota</taxon>
        <taxon>Actinomycetes</taxon>
        <taxon>Mycobacteriales</taxon>
        <taxon>Mycobacteriaceae</taxon>
        <taxon>Mycobacterium</taxon>
        <taxon>Mycobacterium tuberculosis complex</taxon>
    </lineage>
</organism>
<keyword id="KW-0002">3D-structure</keyword>
<keyword id="KW-0285">Flavoprotein</keyword>
<keyword id="KW-0288">FMN</keyword>
<keyword id="KW-0560">Oxidoreductase</keyword>
<keyword id="KW-0664">Pyridoxine biosynthesis</keyword>
<keyword id="KW-1185">Reference proteome</keyword>
<name>PDXH_MYCTU</name>
<feature type="chain" id="PRO_0000167723" description="Pyridoxine 5'-phosphate oxidase">
    <location>
        <begin position="1"/>
        <end position="224"/>
    </location>
</feature>
<feature type="binding site" evidence="1">
    <location>
        <begin position="19"/>
        <end position="22"/>
    </location>
    <ligand>
        <name>substrate</name>
    </ligand>
</feature>
<feature type="binding site" evidence="1">
    <location>
        <begin position="76"/>
        <end position="81"/>
    </location>
    <ligand>
        <name>FMN</name>
        <dbReference type="ChEBI" id="CHEBI:58210"/>
    </ligand>
</feature>
<feature type="binding site" evidence="1">
    <location>
        <position position="81"/>
    </location>
    <ligand>
        <name>substrate</name>
    </ligand>
</feature>
<feature type="binding site" evidence="1">
    <location>
        <begin position="91"/>
        <end position="92"/>
    </location>
    <ligand>
        <name>FMN</name>
        <dbReference type="ChEBI" id="CHEBI:58210"/>
    </ligand>
</feature>
<feature type="binding site" evidence="1">
    <location>
        <position position="98"/>
    </location>
    <ligand>
        <name>FMN</name>
        <dbReference type="ChEBI" id="CHEBI:58210"/>
    </ligand>
</feature>
<feature type="binding site" evidence="1">
    <location>
        <position position="120"/>
    </location>
    <ligand>
        <name>FMN</name>
        <dbReference type="ChEBI" id="CHEBI:58210"/>
    </ligand>
</feature>
<feature type="binding site" evidence="1">
    <location>
        <position position="138"/>
    </location>
    <ligand>
        <name>substrate</name>
    </ligand>
</feature>
<feature type="binding site" evidence="1">
    <location>
        <position position="142"/>
    </location>
    <ligand>
        <name>substrate</name>
    </ligand>
</feature>
<feature type="binding site" evidence="1">
    <location>
        <begin position="155"/>
        <end position="156"/>
    </location>
    <ligand>
        <name>FMN</name>
        <dbReference type="ChEBI" id="CHEBI:58210"/>
    </ligand>
</feature>
<feature type="binding site" evidence="1">
    <location>
        <position position="201"/>
    </location>
    <ligand>
        <name>FMN</name>
        <dbReference type="ChEBI" id="CHEBI:58210"/>
    </ligand>
</feature>
<feature type="binding site" evidence="1">
    <location>
        <begin position="207"/>
        <end position="209"/>
    </location>
    <ligand>
        <name>substrate</name>
    </ligand>
</feature>
<feature type="binding site" evidence="1">
    <location>
        <position position="211"/>
    </location>
    <ligand>
        <name>FMN</name>
        <dbReference type="ChEBI" id="CHEBI:58210"/>
    </ligand>
</feature>
<feature type="turn" evidence="6">
    <location>
        <begin position="25"/>
        <end position="27"/>
    </location>
</feature>
<feature type="helix" evidence="6">
    <location>
        <begin position="34"/>
        <end position="37"/>
    </location>
</feature>
<feature type="helix" evidence="6">
    <location>
        <begin position="40"/>
        <end position="54"/>
    </location>
</feature>
<feature type="strand" evidence="6">
    <location>
        <begin position="62"/>
        <end position="69"/>
    </location>
</feature>
<feature type="strand" evidence="6">
    <location>
        <begin position="72"/>
        <end position="84"/>
    </location>
</feature>
<feature type="strand" evidence="6">
    <location>
        <begin position="87"/>
        <end position="93"/>
    </location>
</feature>
<feature type="helix" evidence="6">
    <location>
        <begin position="97"/>
        <end position="104"/>
    </location>
</feature>
<feature type="strand" evidence="6">
    <location>
        <begin position="107"/>
        <end position="114"/>
    </location>
</feature>
<feature type="helix" evidence="6">
    <location>
        <begin position="115"/>
        <end position="117"/>
    </location>
</feature>
<feature type="strand" evidence="6">
    <location>
        <begin position="119"/>
        <end position="129"/>
    </location>
</feature>
<feature type="helix" evidence="6">
    <location>
        <begin position="132"/>
        <end position="141"/>
    </location>
</feature>
<feature type="helix" evidence="6">
    <location>
        <begin position="144"/>
        <end position="152"/>
    </location>
</feature>
<feature type="helix" evidence="6">
    <location>
        <begin position="163"/>
        <end position="176"/>
    </location>
</feature>
<feature type="strand" evidence="6">
    <location>
        <begin position="188"/>
        <end position="193"/>
    </location>
</feature>
<feature type="strand" evidence="6">
    <location>
        <begin position="196"/>
        <end position="202"/>
    </location>
</feature>
<feature type="strand" evidence="6">
    <location>
        <begin position="210"/>
        <end position="215"/>
    </location>
</feature>
<feature type="strand" evidence="6">
    <location>
        <begin position="218"/>
        <end position="221"/>
    </location>
</feature>
<proteinExistence type="evidence at protein level"/>
<sequence>MDDDAQMVAIDKDQLARMRGEYGPEKDGCGDLDFDWLDDGWLTLLRRWLNDAQRAGVSEPNAMVLATVADGKPVTRSVLCKILDESGVAFFTSYTSAKGEQLAVTPYASATFPWYQLGRQAHVQGPVSKVSTEEIFTYWSMRPRGAQLGAWASQQSRPVGSRAQLDNQLAEVTRRFADQDQIPVPPGWGGYRIAPEIVEFWQGRENRMHNRIRVANGRLERLQP</sequence>
<gene>
    <name evidence="4" type="primary">pdxH</name>
    <name type="ordered locus">Rv2607</name>
    <name type="ORF">MTCY1A10.26c</name>
</gene>
<comment type="function">
    <text evidence="3">Catalyzes the oxidation of pyridoxine 5'-phosphate (PNP) into pyridoxal 5'-phosphate (PLP). Unlike many PNPOx enzymes, Rv2607 does not recognize pyridoxamine 5'-phosphate (PMP) as a substrate.</text>
</comment>
<comment type="catalytic activity">
    <reaction evidence="1 3">
        <text>pyridoxine 5'-phosphate + O2 = pyridoxal 5'-phosphate + H2O2</text>
        <dbReference type="Rhea" id="RHEA:15149"/>
        <dbReference type="ChEBI" id="CHEBI:15379"/>
        <dbReference type="ChEBI" id="CHEBI:16240"/>
        <dbReference type="ChEBI" id="CHEBI:58589"/>
        <dbReference type="ChEBI" id="CHEBI:597326"/>
        <dbReference type="EC" id="1.4.3.5"/>
    </reaction>
</comment>
<comment type="cofactor">
    <cofactor evidence="1 3">
        <name>FMN</name>
        <dbReference type="ChEBI" id="CHEBI:58210"/>
    </cofactor>
    <text evidence="3">Appears to bind only one FMN molecule per homodimer.</text>
</comment>
<comment type="biophysicochemical properties">
    <kinetics>
        <KM evidence="3">360 uM for pyridoxine 5'-phosphate</KM>
        <text evidence="3">kcat is 0.01 sec(-1).</text>
    </kinetics>
</comment>
<comment type="pathway">
    <text evidence="1 3">Cofactor metabolism; pyridoxal 5'-phosphate salvage; pyridoxal 5'-phosphate from pyridoxine 5'-phosphate: step 1/1.</text>
</comment>
<comment type="subunit">
    <text evidence="1 2 3">Homodimer.</text>
</comment>
<comment type="miscellaneous">
    <text evidence="5">The electron density for the FMN cofactor is weak in the crystal structure (PDB 2A2J), which does not allow FMN to be definitively placed in the M.tuberculosis PNPOx active site, but the residues known to interact with FMN in the E.coli and human PNPOx enzymes are found to be conserved.</text>
</comment>
<comment type="similarity">
    <text evidence="1">Belongs to the pyridoxamine 5'-phosphate oxidase family.</text>
</comment>